<proteinExistence type="inferred from homology"/>
<dbReference type="EC" id="2.7.7.27" evidence="1"/>
<dbReference type="EMBL" id="CP000746">
    <property type="protein sequence ID" value="ABR74714.1"/>
    <property type="molecule type" value="Genomic_DNA"/>
</dbReference>
<dbReference type="RefSeq" id="WP_012073091.1">
    <property type="nucleotide sequence ID" value="NC_009655.1"/>
</dbReference>
<dbReference type="SMR" id="A6VP17"/>
<dbReference type="STRING" id="339671.Asuc_1354"/>
<dbReference type="KEGG" id="asu:Asuc_1354"/>
<dbReference type="eggNOG" id="COG0448">
    <property type="taxonomic scope" value="Bacteria"/>
</dbReference>
<dbReference type="HOGENOM" id="CLU_029499_14_1_6"/>
<dbReference type="OrthoDB" id="9801810at2"/>
<dbReference type="UniPathway" id="UPA00164"/>
<dbReference type="Proteomes" id="UP000001114">
    <property type="component" value="Chromosome"/>
</dbReference>
<dbReference type="GO" id="GO:0005524">
    <property type="term" value="F:ATP binding"/>
    <property type="evidence" value="ECO:0007669"/>
    <property type="project" value="UniProtKB-KW"/>
</dbReference>
<dbReference type="GO" id="GO:0008878">
    <property type="term" value="F:glucose-1-phosphate adenylyltransferase activity"/>
    <property type="evidence" value="ECO:0007669"/>
    <property type="project" value="UniProtKB-UniRule"/>
</dbReference>
<dbReference type="GO" id="GO:0005978">
    <property type="term" value="P:glycogen biosynthetic process"/>
    <property type="evidence" value="ECO:0007669"/>
    <property type="project" value="UniProtKB-UniRule"/>
</dbReference>
<dbReference type="CDD" id="cd02508">
    <property type="entry name" value="ADP_Glucose_PP"/>
    <property type="match status" value="1"/>
</dbReference>
<dbReference type="CDD" id="cd04651">
    <property type="entry name" value="LbH_G1P_AT_C"/>
    <property type="match status" value="1"/>
</dbReference>
<dbReference type="Gene3D" id="2.160.10.10">
    <property type="entry name" value="Hexapeptide repeat proteins"/>
    <property type="match status" value="1"/>
</dbReference>
<dbReference type="Gene3D" id="3.90.550.10">
    <property type="entry name" value="Spore Coat Polysaccharide Biosynthesis Protein SpsA, Chain A"/>
    <property type="match status" value="1"/>
</dbReference>
<dbReference type="HAMAP" id="MF_00624">
    <property type="entry name" value="GlgC"/>
    <property type="match status" value="1"/>
</dbReference>
<dbReference type="InterPro" id="IPR011831">
    <property type="entry name" value="ADP-Glc_PPase"/>
</dbReference>
<dbReference type="InterPro" id="IPR005836">
    <property type="entry name" value="ADP_Glu_pyroP_CS"/>
</dbReference>
<dbReference type="InterPro" id="IPR023049">
    <property type="entry name" value="GlgC_bac"/>
</dbReference>
<dbReference type="InterPro" id="IPR056818">
    <property type="entry name" value="GlmU/GlgC-like_hexapep"/>
</dbReference>
<dbReference type="InterPro" id="IPR005835">
    <property type="entry name" value="NTP_transferase_dom"/>
</dbReference>
<dbReference type="InterPro" id="IPR029044">
    <property type="entry name" value="Nucleotide-diphossugar_trans"/>
</dbReference>
<dbReference type="InterPro" id="IPR011004">
    <property type="entry name" value="Trimer_LpxA-like_sf"/>
</dbReference>
<dbReference type="NCBIfam" id="TIGR02091">
    <property type="entry name" value="glgC"/>
    <property type="match status" value="1"/>
</dbReference>
<dbReference type="NCBIfam" id="NF001947">
    <property type="entry name" value="PRK00725.1"/>
    <property type="match status" value="1"/>
</dbReference>
<dbReference type="NCBIfam" id="NF002023">
    <property type="entry name" value="PRK00844.1"/>
    <property type="match status" value="1"/>
</dbReference>
<dbReference type="PANTHER" id="PTHR43523:SF2">
    <property type="entry name" value="GLUCOSE-1-PHOSPHATE ADENYLYLTRANSFERASE"/>
    <property type="match status" value="1"/>
</dbReference>
<dbReference type="PANTHER" id="PTHR43523">
    <property type="entry name" value="GLUCOSE-1-PHOSPHATE ADENYLYLTRANSFERASE-RELATED"/>
    <property type="match status" value="1"/>
</dbReference>
<dbReference type="Pfam" id="PF24894">
    <property type="entry name" value="Hexapep_GlmU"/>
    <property type="match status" value="1"/>
</dbReference>
<dbReference type="Pfam" id="PF00483">
    <property type="entry name" value="NTP_transferase"/>
    <property type="match status" value="1"/>
</dbReference>
<dbReference type="SUPFAM" id="SSF53448">
    <property type="entry name" value="Nucleotide-diphospho-sugar transferases"/>
    <property type="match status" value="1"/>
</dbReference>
<dbReference type="SUPFAM" id="SSF51161">
    <property type="entry name" value="Trimeric LpxA-like enzymes"/>
    <property type="match status" value="1"/>
</dbReference>
<dbReference type="PROSITE" id="PS00808">
    <property type="entry name" value="ADP_GLC_PYROPHOSPH_1"/>
    <property type="match status" value="1"/>
</dbReference>
<dbReference type="PROSITE" id="PS00809">
    <property type="entry name" value="ADP_GLC_PYROPHOSPH_2"/>
    <property type="match status" value="1"/>
</dbReference>
<dbReference type="PROSITE" id="PS00810">
    <property type="entry name" value="ADP_GLC_PYROPHOSPH_3"/>
    <property type="match status" value="1"/>
</dbReference>
<protein>
    <recommendedName>
        <fullName evidence="1">Glucose-1-phosphate adenylyltransferase</fullName>
        <ecNumber evidence="1">2.7.7.27</ecNumber>
    </recommendedName>
    <alternativeName>
        <fullName evidence="1">ADP-glucose pyrophosphorylase</fullName>
        <shortName evidence="1">ADPGlc PPase</shortName>
    </alternativeName>
    <alternativeName>
        <fullName evidence="1">ADP-glucose synthase</fullName>
    </alternativeName>
</protein>
<organism>
    <name type="scientific">Actinobacillus succinogenes (strain ATCC 55618 / DSM 22257 / CCUG 43843 / 130Z)</name>
    <dbReference type="NCBI Taxonomy" id="339671"/>
    <lineage>
        <taxon>Bacteria</taxon>
        <taxon>Pseudomonadati</taxon>
        <taxon>Pseudomonadota</taxon>
        <taxon>Gammaproteobacteria</taxon>
        <taxon>Pasteurellales</taxon>
        <taxon>Pasteurellaceae</taxon>
        <taxon>Actinobacillus</taxon>
    </lineage>
</organism>
<gene>
    <name evidence="1" type="primary">glgC</name>
    <name type="ordered locus">Asuc_1354</name>
</gene>
<keyword id="KW-0067">ATP-binding</keyword>
<keyword id="KW-0119">Carbohydrate metabolism</keyword>
<keyword id="KW-0320">Glycogen biosynthesis</keyword>
<keyword id="KW-0321">Glycogen metabolism</keyword>
<keyword id="KW-0547">Nucleotide-binding</keyword>
<keyword id="KW-0548">Nucleotidyltransferase</keyword>
<keyword id="KW-1185">Reference proteome</keyword>
<keyword id="KW-0808">Transferase</keyword>
<sequence>MSKVITKYDLVGDTLVLILAGGRGSRLHELTDKRAKPALYFGGNRRIIDFALSNCINSGLNRIGVITQYAAHSLLRHLQTGWSFLPQERGEFVDMLPARQQIDDNTWYRGTADSVYQNMAIIKNHYKPKYILILAGDHIYKMDYSQMILDHVNSGAKCTVGCIEVPRESAKEFGVMAVNENLKVKAFVEKPSDPPAMIGKPNSSLASMGIYVFNAEYLYETLERTVNSPQTSHDFGKDIMPMALEDEVLYAHPFDRSCMGRNTEGEIYWRDVGTLDSYWQSNIDLVSKEPQLDIYDQTWPIRGNPVQAYPSKFFYDDPACKQVDNSLIAGGCVITNASISYSVLFDNIHVNEGTLIDESVILPQVKVGKNCILKRCIVDRHVQIPDGMQIGVDPEEDSKHFRISSKGIVLVTEKMLQKMKGETVKSEDDLD</sequence>
<evidence type="ECO:0000255" key="1">
    <source>
        <dbReference type="HAMAP-Rule" id="MF_00624"/>
    </source>
</evidence>
<accession>A6VP17</accession>
<feature type="chain" id="PRO_1000212296" description="Glucose-1-phosphate adenylyltransferase">
    <location>
        <begin position="1"/>
        <end position="431"/>
    </location>
</feature>
<feature type="binding site" evidence="1">
    <location>
        <position position="108"/>
    </location>
    <ligand>
        <name>alpha-D-glucose 1-phosphate</name>
        <dbReference type="ChEBI" id="CHEBI:58601"/>
    </ligand>
</feature>
<feature type="binding site" evidence="1">
    <location>
        <position position="174"/>
    </location>
    <ligand>
        <name>alpha-D-glucose 1-phosphate</name>
        <dbReference type="ChEBI" id="CHEBI:58601"/>
    </ligand>
</feature>
<feature type="binding site" evidence="1">
    <location>
        <begin position="189"/>
        <end position="190"/>
    </location>
    <ligand>
        <name>alpha-D-glucose 1-phosphate</name>
        <dbReference type="ChEBI" id="CHEBI:58601"/>
    </ligand>
</feature>
<feature type="binding site" evidence="1">
    <location>
        <position position="207"/>
    </location>
    <ligand>
        <name>alpha-D-glucose 1-phosphate</name>
        <dbReference type="ChEBI" id="CHEBI:58601"/>
    </ligand>
</feature>
<comment type="function">
    <text evidence="1">Involved in the biosynthesis of ADP-glucose, a building block required for the elongation reactions to produce glycogen. Catalyzes the reaction between ATP and alpha-D-glucose 1-phosphate (G1P) to produce pyrophosphate and ADP-Glc.</text>
</comment>
<comment type="catalytic activity">
    <reaction evidence="1">
        <text>alpha-D-glucose 1-phosphate + ATP + H(+) = ADP-alpha-D-glucose + diphosphate</text>
        <dbReference type="Rhea" id="RHEA:12120"/>
        <dbReference type="ChEBI" id="CHEBI:15378"/>
        <dbReference type="ChEBI" id="CHEBI:30616"/>
        <dbReference type="ChEBI" id="CHEBI:33019"/>
        <dbReference type="ChEBI" id="CHEBI:57498"/>
        <dbReference type="ChEBI" id="CHEBI:58601"/>
        <dbReference type="EC" id="2.7.7.27"/>
    </reaction>
</comment>
<comment type="pathway">
    <text evidence="1">Glycan biosynthesis; glycogen biosynthesis.</text>
</comment>
<comment type="subunit">
    <text evidence="1">Homotetramer.</text>
</comment>
<comment type="similarity">
    <text evidence="1">Belongs to the bacterial/plant glucose-1-phosphate adenylyltransferase family.</text>
</comment>
<name>GLGC_ACTSZ</name>
<reference key="1">
    <citation type="journal article" date="2010" name="BMC Genomics">
        <title>A genomic perspective on the potential of Actinobacillus succinogenes for industrial succinate production.</title>
        <authorList>
            <person name="McKinlay J.B."/>
            <person name="Laivenieks M."/>
            <person name="Schindler B.D."/>
            <person name="McKinlay A.A."/>
            <person name="Siddaramappa S."/>
            <person name="Challacombe J.F."/>
            <person name="Lowry S.R."/>
            <person name="Clum A."/>
            <person name="Lapidus A.L."/>
            <person name="Burkhart K.B."/>
            <person name="Harkins V."/>
            <person name="Vieille C."/>
        </authorList>
    </citation>
    <scope>NUCLEOTIDE SEQUENCE [LARGE SCALE GENOMIC DNA]</scope>
    <source>
        <strain>ATCC 55618 / DSM 22257 / CCUG 43843 / 130Z</strain>
    </source>
</reference>